<name>YL180_MIMIV</name>
<gene>
    <name type="ordered locus">MIMI_L180</name>
</gene>
<reference key="1">
    <citation type="journal article" date="2004" name="Science">
        <title>The 1.2-megabase genome sequence of Mimivirus.</title>
        <authorList>
            <person name="Raoult D."/>
            <person name="Audic S."/>
            <person name="Robert C."/>
            <person name="Abergel C."/>
            <person name="Renesto P."/>
            <person name="Ogata H."/>
            <person name="La Scola B."/>
            <person name="Susan M."/>
            <person name="Claverie J.-M."/>
        </authorList>
    </citation>
    <scope>NUCLEOTIDE SEQUENCE [LARGE SCALE GENOMIC DNA]</scope>
    <source>
        <strain>Rowbotham-Bradford</strain>
    </source>
</reference>
<keyword id="KW-1185">Reference proteome</keyword>
<protein>
    <recommendedName>
        <fullName>Uncharacterized protein L180</fullName>
    </recommendedName>
</protein>
<evidence type="ECO:0000305" key="1"/>
<feature type="chain" id="PRO_0000071236" description="Uncharacterized protein L180">
    <location>
        <begin position="1"/>
        <end position="375"/>
    </location>
</feature>
<proteinExistence type="inferred from homology"/>
<comment type="similarity">
    <text evidence="1">Belongs to the mimivirus L17x/L18x family.</text>
</comment>
<dbReference type="EMBL" id="AY653733">
    <property type="protein sequence ID" value="AAV50454.1"/>
    <property type="molecule type" value="Genomic_DNA"/>
</dbReference>
<dbReference type="SMR" id="Q5UPN5"/>
<dbReference type="KEGG" id="vg:9924782"/>
<dbReference type="Proteomes" id="UP000001134">
    <property type="component" value="Genome"/>
</dbReference>
<organismHost>
    <name type="scientific">Acanthamoeba polyphaga</name>
    <name type="common">Amoeba</name>
    <dbReference type="NCBI Taxonomy" id="5757"/>
</organismHost>
<accession>Q5UPN5</accession>
<sequence length="375" mass="44538">MSDFIFCYGSQNKKRLSKYIKQTKNNHKLYLSDDNYIHIKIETRIGRKYIVVDFNDSLDFINFIVRKKIYCNSKNKHNCDPLKLHSDYLNYIVQHKHYDIIKIFYKKFIPLIKSRQNLESLRFAFQNRDNLEVIKYIFKCGSLEDTKELIIDAFIKIPNITMEFMDDIISIYKHKFTKVFMTNGLYTPVTLKIDLDYFLKPAFRTDDVNLFDIIVEELSTLTDEIDKTKLDKKQLEYLKFFDTTLNAGDINSILYHDLIYNINNPKDKSHNYYCPNIFRRMIFSLDNINLLRDNVFDILTLDLIEYANILCDFIGNNDPGFIEMMFIYAKSTEMAQLLIDSGVDYEALYKSNKLYRSEPVVKKLVNRLIKENANS</sequence>
<organism>
    <name type="scientific">Acanthamoeba polyphaga mimivirus</name>
    <name type="common">APMV</name>
    <dbReference type="NCBI Taxonomy" id="212035"/>
    <lineage>
        <taxon>Viruses</taxon>
        <taxon>Varidnaviria</taxon>
        <taxon>Bamfordvirae</taxon>
        <taxon>Nucleocytoviricota</taxon>
        <taxon>Megaviricetes</taxon>
        <taxon>Imitervirales</taxon>
        <taxon>Mimiviridae</taxon>
        <taxon>Megamimivirinae</taxon>
        <taxon>Mimivirus</taxon>
        <taxon>Mimivirus bradfordmassiliense</taxon>
    </lineage>
</organism>